<reference key="1">
    <citation type="journal article" date="1982" name="Proc. Natl. Acad. Sci. U.S.A.">
        <title>Rat pancreatic kallikrein mRNA: nucleotide sequence and amino acid sequence of the encoded preproenzyme.</title>
        <authorList>
            <person name="Swift G.H."/>
            <person name="Dagorn J.-C."/>
            <person name="Ashley P.L."/>
            <person name="Cummings S.W."/>
            <person name="MacDonald R.J."/>
        </authorList>
    </citation>
    <scope>NUCLEOTIDE SEQUENCE [MRNA]</scope>
    <scope>TISSUE SPECIFICITY</scope>
    <source>
        <tissue>Pancreas</tissue>
    </source>
</reference>
<reference key="2">
    <citation type="journal article" date="1985" name="Biochemistry">
        <title>Kallikrein-related mRNAs of the rat submaxillary gland: nucleotide sequences of four distinct types including tonin.</title>
        <authorList>
            <person name="Ashley P.L."/>
            <person name="MacDonald R.J."/>
        </authorList>
    </citation>
    <scope>NUCLEOTIDE SEQUENCE [MRNA]</scope>
    <source>
        <tissue>Submandibular gland</tissue>
    </source>
</reference>
<reference key="3">
    <citation type="journal article" date="1989" name="J. Biochem.">
        <title>Identification and structure of the rat true tissue kallikrein gene expressed in the kidney.</title>
        <authorList>
            <person name="Inoue H."/>
            <person name="Fukui K."/>
            <person name="Miyake Y."/>
        </authorList>
    </citation>
    <scope>NUCLEOTIDE SEQUENCE [GENOMIC DNA]</scope>
    <source>
        <tissue>Kidney</tissue>
    </source>
</reference>
<reference key="4">
    <citation type="journal article" date="1989" name="J. Biol. Chem.">
        <title>Organization and expression of the rat kallikrein gene family.</title>
        <authorList>
            <person name="Wines D.R."/>
            <person name="Brady J.M."/>
            <person name="Pritchett D.B."/>
            <person name="Roberts J.L."/>
            <person name="MacDonald R.J."/>
        </authorList>
    </citation>
    <scope>NUCLEOTIDE SEQUENCE [GENOMIC DNA]</scope>
</reference>
<reference key="5">
    <citation type="journal article" date="2004" name="Genome Res.">
        <title>The status, quality, and expansion of the NIH full-length cDNA project: the Mammalian Gene Collection (MGC).</title>
        <authorList>
            <consortium name="The MGC Project Team"/>
        </authorList>
    </citation>
    <scope>NUCLEOTIDE SEQUENCE [LARGE SCALE MRNA]</scope>
    <source>
        <tissue>Kidney</tissue>
    </source>
</reference>
<reference key="6">
    <citation type="journal article" date="1986" name="Biochim. Biophys. Acta">
        <title>Immunological identification of rat tissue kallikrein cDNA and characterization of the kallikrein gene family.</title>
        <authorList>
            <person name="Gerald W.L."/>
            <person name="Chao J."/>
            <person name="Chao L."/>
        </authorList>
    </citation>
    <scope>NUCLEOTIDE SEQUENCE [MRNA] OF 48-261</scope>
    <source>
        <tissue>Submandibular gland</tissue>
    </source>
</reference>
<comment type="catalytic activity">
    <reaction>
        <text>Preferential cleavage of Arg-|-Xaa bonds in small molecule substrates. Highly selective action to release kallidin (lysyl-bradykinin) from kininogen involves hydrolysis of Met-|-Xaa or Leu-|-Xaa.</text>
        <dbReference type="EC" id="3.4.21.35"/>
    </reaction>
</comment>
<comment type="tissue specificity">
    <text evidence="2">High levels in pancreas, submaxillary and parotid glands, spleen, and kidney.</text>
</comment>
<comment type="similarity">
    <text evidence="1">Belongs to the peptidase S1 family. Kallikrein subfamily.</text>
</comment>
<comment type="sequence caution" evidence="3">
    <conflict type="erroneous initiation">
        <sequence resource="EMBL-CDS" id="AAA41464"/>
    </conflict>
</comment>
<comment type="sequence caution" evidence="3">
    <conflict type="erroneous initiation">
        <sequence resource="EMBL-CDS" id="AAH78784"/>
    </conflict>
</comment>
<comment type="sequence caution" evidence="3">
    <conflict type="erroneous initiation">
        <sequence resource="EMBL-CDS" id="BAA00346"/>
    </conflict>
</comment>
<keyword id="KW-1015">Disulfide bond</keyword>
<keyword id="KW-0325">Glycoprotein</keyword>
<keyword id="KW-0378">Hydrolase</keyword>
<keyword id="KW-0645">Protease</keyword>
<keyword id="KW-1185">Reference proteome</keyword>
<keyword id="KW-0720">Serine protease</keyword>
<keyword id="KW-0732">Signal</keyword>
<keyword id="KW-0865">Zymogen</keyword>
<proteinExistence type="evidence at transcript level"/>
<dbReference type="EC" id="3.4.21.35"/>
<dbReference type="EMBL" id="J00758">
    <property type="status" value="NOT_ANNOTATED_CDS"/>
    <property type="molecule type" value="mRNA"/>
</dbReference>
<dbReference type="EMBL" id="M11563">
    <property type="protein sequence ID" value="AAA41464.1"/>
    <property type="status" value="ALT_INIT"/>
    <property type="molecule type" value="mRNA"/>
</dbReference>
<dbReference type="EMBL" id="D00448">
    <property type="protein sequence ID" value="BAA00346.1"/>
    <property type="status" value="ALT_INIT"/>
    <property type="molecule type" value="Genomic_DNA"/>
</dbReference>
<dbReference type="EMBL" id="M23876">
    <property type="protein sequence ID" value="AAA41462.1"/>
    <property type="molecule type" value="Genomic_DNA"/>
</dbReference>
<dbReference type="EMBL" id="M23874">
    <property type="protein sequence ID" value="AAA41462.1"/>
    <property type="status" value="JOINED"/>
    <property type="molecule type" value="Genomic_DNA"/>
</dbReference>
<dbReference type="EMBL" id="M23875">
    <property type="protein sequence ID" value="AAA41462.1"/>
    <property type="status" value="JOINED"/>
    <property type="molecule type" value="Genomic_DNA"/>
</dbReference>
<dbReference type="EMBL" id="BC078784">
    <property type="protein sequence ID" value="AAH78784.1"/>
    <property type="status" value="ALT_INIT"/>
    <property type="molecule type" value="mRNA"/>
</dbReference>
<dbReference type="EMBL" id="X03560">
    <property type="protein sequence ID" value="CAA27247.1"/>
    <property type="molecule type" value="mRNA"/>
</dbReference>
<dbReference type="PIR" id="A00944">
    <property type="entry name" value="KQRTP"/>
</dbReference>
<dbReference type="RefSeq" id="NP_113711.1">
    <property type="nucleotide sequence ID" value="NM_031523.1"/>
</dbReference>
<dbReference type="SMR" id="P00758"/>
<dbReference type="FunCoup" id="P00758">
    <property type="interactions" value="49"/>
</dbReference>
<dbReference type="IntAct" id="P00758">
    <property type="interactions" value="3"/>
</dbReference>
<dbReference type="MEROPS" id="S01.405"/>
<dbReference type="GlyCosmos" id="P00758">
    <property type="glycosylation" value="1 site, No reported glycans"/>
</dbReference>
<dbReference type="GlyGen" id="P00758">
    <property type="glycosylation" value="1 site"/>
</dbReference>
<dbReference type="PaxDb" id="10116-ENSRNOP00000025831"/>
<dbReference type="GeneID" id="24594"/>
<dbReference type="KEGG" id="rno:24594"/>
<dbReference type="UCSC" id="RGD:3175">
    <property type="organism name" value="rat"/>
</dbReference>
<dbReference type="AGR" id="RGD:3175"/>
<dbReference type="CTD" id="18050"/>
<dbReference type="RGD" id="3175">
    <property type="gene designation" value="Ngfg"/>
</dbReference>
<dbReference type="eggNOG" id="KOG3627">
    <property type="taxonomic scope" value="Eukaryota"/>
</dbReference>
<dbReference type="InParanoid" id="P00758"/>
<dbReference type="OrthoDB" id="63297at9989"/>
<dbReference type="PhylomeDB" id="P00758"/>
<dbReference type="TreeFam" id="TF331065"/>
<dbReference type="BRENDA" id="3.4.21.35">
    <property type="organism ID" value="5301"/>
</dbReference>
<dbReference type="Reactome" id="R-RNO-1592389">
    <property type="pathway name" value="Activation of Matrix Metalloproteinases"/>
</dbReference>
<dbReference type="Reactome" id="R-RNO-381426">
    <property type="pathway name" value="Regulation of Insulin-like Growth Factor (IGF) transport and uptake by Insulin-like Growth Factor Binding Proteins (IGFBPs)"/>
</dbReference>
<dbReference type="PRO" id="PR:P00758"/>
<dbReference type="Proteomes" id="UP000002494">
    <property type="component" value="Unplaced"/>
</dbReference>
<dbReference type="GO" id="GO:0005615">
    <property type="term" value="C:extracellular space"/>
    <property type="evidence" value="ECO:0000318"/>
    <property type="project" value="GO_Central"/>
</dbReference>
<dbReference type="GO" id="GO:0030141">
    <property type="term" value="C:secretory granule"/>
    <property type="evidence" value="ECO:0000318"/>
    <property type="project" value="GO_Central"/>
</dbReference>
<dbReference type="GO" id="GO:0004252">
    <property type="term" value="F:serine-type endopeptidase activity"/>
    <property type="evidence" value="ECO:0000318"/>
    <property type="project" value="GO_Central"/>
</dbReference>
<dbReference type="GO" id="GO:0003073">
    <property type="term" value="P:regulation of systemic arterial blood pressure"/>
    <property type="evidence" value="ECO:0000318"/>
    <property type="project" value="GO_Central"/>
</dbReference>
<dbReference type="GO" id="GO:0031638">
    <property type="term" value="P:zymogen activation"/>
    <property type="evidence" value="ECO:0000318"/>
    <property type="project" value="GO_Central"/>
</dbReference>
<dbReference type="CDD" id="cd00190">
    <property type="entry name" value="Tryp_SPc"/>
    <property type="match status" value="1"/>
</dbReference>
<dbReference type="FunFam" id="2.40.10.10:FF:000032">
    <property type="entry name" value="Kallikrein 1-related peptidase C9"/>
    <property type="match status" value="1"/>
</dbReference>
<dbReference type="FunFam" id="2.40.10.10:FF:000042">
    <property type="entry name" value="Kallikrein 1-related peptidase C9"/>
    <property type="match status" value="1"/>
</dbReference>
<dbReference type="Gene3D" id="2.40.10.10">
    <property type="entry name" value="Trypsin-like serine proteases"/>
    <property type="match status" value="2"/>
</dbReference>
<dbReference type="InterPro" id="IPR009003">
    <property type="entry name" value="Peptidase_S1_PA"/>
</dbReference>
<dbReference type="InterPro" id="IPR043504">
    <property type="entry name" value="Peptidase_S1_PA_chymotrypsin"/>
</dbReference>
<dbReference type="InterPro" id="IPR001314">
    <property type="entry name" value="Peptidase_S1A"/>
</dbReference>
<dbReference type="InterPro" id="IPR001254">
    <property type="entry name" value="Trypsin_dom"/>
</dbReference>
<dbReference type="InterPro" id="IPR018114">
    <property type="entry name" value="TRYPSIN_HIS"/>
</dbReference>
<dbReference type="InterPro" id="IPR033116">
    <property type="entry name" value="TRYPSIN_SER"/>
</dbReference>
<dbReference type="PANTHER" id="PTHR24271:SF47">
    <property type="entry name" value="KALLIKREIN-1"/>
    <property type="match status" value="1"/>
</dbReference>
<dbReference type="PANTHER" id="PTHR24271">
    <property type="entry name" value="KALLIKREIN-RELATED"/>
    <property type="match status" value="1"/>
</dbReference>
<dbReference type="Pfam" id="PF00089">
    <property type="entry name" value="Trypsin"/>
    <property type="match status" value="1"/>
</dbReference>
<dbReference type="PRINTS" id="PR00722">
    <property type="entry name" value="CHYMOTRYPSIN"/>
</dbReference>
<dbReference type="SMART" id="SM00020">
    <property type="entry name" value="Tryp_SPc"/>
    <property type="match status" value="1"/>
</dbReference>
<dbReference type="SUPFAM" id="SSF50494">
    <property type="entry name" value="Trypsin-like serine proteases"/>
    <property type="match status" value="1"/>
</dbReference>
<dbReference type="PROSITE" id="PS50240">
    <property type="entry name" value="TRYPSIN_DOM"/>
    <property type="match status" value="1"/>
</dbReference>
<dbReference type="PROSITE" id="PS00134">
    <property type="entry name" value="TRYPSIN_HIS"/>
    <property type="match status" value="1"/>
</dbReference>
<dbReference type="PROSITE" id="PS00135">
    <property type="entry name" value="TRYPSIN_SER"/>
    <property type="match status" value="1"/>
</dbReference>
<gene>
    <name type="primary">Ngfg</name>
    <name type="synonym">Klk-1</name>
    <name type="synonym">Klk1</name>
</gene>
<evidence type="ECO:0000255" key="1">
    <source>
        <dbReference type="PROSITE-ProRule" id="PRU00274"/>
    </source>
</evidence>
<evidence type="ECO:0000269" key="2">
    <source>
    </source>
</evidence>
<evidence type="ECO:0000305" key="3"/>
<protein>
    <recommendedName>
        <fullName>Kallikrein-1</fullName>
        <ecNumber>3.4.21.35</ecNumber>
    </recommendedName>
    <alternativeName>
        <fullName>Gamma-NGF</fullName>
    </alternativeName>
    <alternativeName>
        <fullName>Nerve growth factor gamma chain</fullName>
    </alternativeName>
    <alternativeName>
        <fullName>PS kallikrein</fullName>
    </alternativeName>
    <alternativeName>
        <fullName>Pancreatic kallikrein</fullName>
    </alternativeName>
    <alternativeName>
        <fullName>RGK-1</fullName>
        <shortName>rK-1</shortName>
    </alternativeName>
    <alternativeName>
        <fullName>Tissue kallikrein</fullName>
    </alternativeName>
    <alternativeName>
        <fullName>True tissue kallikrein</fullName>
        <shortName>True kallikrein</shortName>
    </alternativeName>
    <component>
        <recommendedName>
            <fullName>Nerve growth factor gamma chain 1</fullName>
        </recommendedName>
    </component>
    <component>
        <recommendedName>
            <fullName>Nerve growth factor gamma chain 2</fullName>
        </recommendedName>
    </component>
</protein>
<organism>
    <name type="scientific">Rattus norvegicus</name>
    <name type="common">Rat</name>
    <dbReference type="NCBI Taxonomy" id="10116"/>
    <lineage>
        <taxon>Eukaryota</taxon>
        <taxon>Metazoa</taxon>
        <taxon>Chordata</taxon>
        <taxon>Craniata</taxon>
        <taxon>Vertebrata</taxon>
        <taxon>Euteleostomi</taxon>
        <taxon>Mammalia</taxon>
        <taxon>Eutheria</taxon>
        <taxon>Euarchontoglires</taxon>
        <taxon>Glires</taxon>
        <taxon>Rodentia</taxon>
        <taxon>Myomorpha</taxon>
        <taxon>Muroidea</taxon>
        <taxon>Muridae</taxon>
        <taxon>Murinae</taxon>
        <taxon>Rattus</taxon>
    </lineage>
</organism>
<name>KLK1_RAT</name>
<accession>P00758</accession>
<accession>Q68G17</accession>
<feature type="signal peptide" evidence="3">
    <location>
        <begin position="1"/>
        <end position="18"/>
    </location>
</feature>
<feature type="propeptide" id="PRO_0000027999" description="Activation peptide" evidence="3">
    <location>
        <begin position="19"/>
        <end position="24"/>
    </location>
</feature>
<feature type="chain" id="PRO_0000028000" description="Kallikrein-1">
    <location>
        <begin position="25"/>
        <end position="261"/>
    </location>
</feature>
<feature type="chain" id="PRO_0000028001" description="Nerve growth factor gamma chain 1">
    <location>
        <begin position="25"/>
        <end position="111"/>
    </location>
</feature>
<feature type="chain" id="PRO_0000028002" description="Nerve growth factor gamma chain 2">
    <location>
        <begin position="112"/>
        <end position="261"/>
    </location>
</feature>
<feature type="domain" description="Peptidase S1" evidence="1">
    <location>
        <begin position="25"/>
        <end position="258"/>
    </location>
</feature>
<feature type="active site" description="Charge relay system">
    <location>
        <position position="65"/>
    </location>
</feature>
<feature type="active site" description="Charge relay system">
    <location>
        <position position="120"/>
    </location>
</feature>
<feature type="active site" description="Charge relay system">
    <location>
        <position position="213"/>
    </location>
</feature>
<feature type="glycosylation site" description="N-linked (GlcNAc...) asparagine" evidence="3">
    <location>
        <position position="108"/>
    </location>
</feature>
<feature type="disulfide bond" evidence="1">
    <location>
        <begin position="31"/>
        <end position="173"/>
    </location>
</feature>
<feature type="disulfide bond" evidence="1">
    <location>
        <begin position="50"/>
        <end position="66"/>
    </location>
</feature>
<feature type="disulfide bond" evidence="1">
    <location>
        <begin position="152"/>
        <end position="219"/>
    </location>
</feature>
<feature type="disulfide bond" evidence="1">
    <location>
        <begin position="184"/>
        <end position="198"/>
    </location>
</feature>
<feature type="disulfide bond" evidence="1">
    <location>
        <begin position="209"/>
        <end position="234"/>
    </location>
</feature>
<sequence>MWFLILFLALSLGRNDAAPPVQSRVVGGYNCEMNSQPWQVAVYYFGEYLCGGVLIDPSWVITAAHCATDNYQVWLGRNNLYEDEPFAQHRLVSQSFPHPGFNQDLIWNHTRQPGDDYSNDLMLLHLSQPADITDGVKVIDLPIEEPKVGSTCLASGWGSITPDGLELSDDLQCVNIDLLSNEKCVEAHKEEVTDLMLCAGEMDGGKDTCKGDSGGPLICNGVLQGITSWGFNPCGEPKKPGIYTKLIKFTPWIKEVMKENP</sequence>